<sequence>MKKKVLTFPSEKIGFSSDNEEFDLVMARGDYLAKNKSQKYMIIDMLGTGTFGQVVRCVGSDGEEVAIKVVKNQPKYYNYEMNEVRILHKLLYNNLNDRFVTIKDVFMYKQHLCIVEELLGRNLYTFLKMTRFKGLDHPTLRTILHQILEGMVQLSLLGIIHCDLKPENILIADYDTFKIKIIDFGSAVTSPQGSHFYVQSRYYRAPEVILGIPYGSSCDIWSLGCIGYELYVGHPLFPGKDNMDQIGRIHGLFGSLPMFMLEHGKNSSTFFEKENGYRFMGPPSNFTLEDMKKMIRSKGNSKEDDNMLIKFLLRALQPSHLIRPDAKSLASHSYLKVRDTSAEADKACNDRSGVQQNIFPANKNMRHMSTTGVILPSKKQKPTDDRRKISVYGISYENNLNRDSE</sequence>
<name>YAK1_ENCCU</name>
<keyword id="KW-0067">ATP-binding</keyword>
<keyword id="KW-0963">Cytoplasm</keyword>
<keyword id="KW-0418">Kinase</keyword>
<keyword id="KW-0547">Nucleotide-binding</keyword>
<keyword id="KW-0539">Nucleus</keyword>
<keyword id="KW-1185">Reference proteome</keyword>
<keyword id="KW-0723">Serine/threonine-protein kinase</keyword>
<keyword id="KW-0808">Transferase</keyword>
<reference key="1">
    <citation type="journal article" date="2001" name="Nature">
        <title>Genome sequence and gene compaction of the eukaryote parasite Encephalitozoon cuniculi.</title>
        <authorList>
            <person name="Katinka M.D."/>
            <person name="Duprat S."/>
            <person name="Cornillot E."/>
            <person name="Metenier G."/>
            <person name="Thomarat F."/>
            <person name="Prensier G."/>
            <person name="Barbe V."/>
            <person name="Peyretaillade E."/>
            <person name="Brottier P."/>
            <person name="Wincker P."/>
            <person name="Delbac F."/>
            <person name="El Alaoui H."/>
            <person name="Peyret P."/>
            <person name="Saurin W."/>
            <person name="Gouy M."/>
            <person name="Weissenbach J."/>
            <person name="Vivares C.P."/>
        </authorList>
    </citation>
    <scope>NUCLEOTIDE SEQUENCE [LARGE SCALE GENOMIC DNA]</scope>
    <source>
        <strain>GB-M1</strain>
    </source>
</reference>
<reference key="2">
    <citation type="journal article" date="2007" name="BMC Genomics">
        <title>The complement of protein kinases of the microsporidium Encephalitozoon cuniculi in relation to those of Saccharomyces cerevisiae and Schizosaccharomyces pombe.</title>
        <authorList>
            <person name="Miranda-Saavedra D."/>
            <person name="Stark M.J.R."/>
            <person name="Packer J.C."/>
            <person name="Vivares C.P."/>
            <person name="Doerig C."/>
            <person name="Barton G.J."/>
        </authorList>
    </citation>
    <scope>PREDICTION OF FUNCTION</scope>
</reference>
<dbReference type="EC" id="2.7.12.1"/>
<dbReference type="EMBL" id="AL590450">
    <property type="protein sequence ID" value="CAD25928.1"/>
    <property type="molecule type" value="Genomic_DNA"/>
</dbReference>
<dbReference type="RefSeq" id="NP_586324.1">
    <property type="nucleotide sequence ID" value="NM_001042157.1"/>
</dbReference>
<dbReference type="SMR" id="Q8SQZ4"/>
<dbReference type="FunCoup" id="Q8SQZ4">
    <property type="interactions" value="110"/>
</dbReference>
<dbReference type="STRING" id="284813.Q8SQZ4"/>
<dbReference type="GeneID" id="859975"/>
<dbReference type="KEGG" id="ecu:ECU11_0180"/>
<dbReference type="VEuPathDB" id="MicrosporidiaDB:ECU11_0180"/>
<dbReference type="HOGENOM" id="CLU_000288_5_15_1"/>
<dbReference type="InParanoid" id="Q8SQZ4"/>
<dbReference type="OMA" id="YEMNEVR"/>
<dbReference type="OrthoDB" id="9332038at2759"/>
<dbReference type="Proteomes" id="UP000000819">
    <property type="component" value="Chromosome XI"/>
</dbReference>
<dbReference type="GO" id="GO:0005737">
    <property type="term" value="C:cytoplasm"/>
    <property type="evidence" value="ECO:0007669"/>
    <property type="project" value="UniProtKB-SubCell"/>
</dbReference>
<dbReference type="GO" id="GO:0005634">
    <property type="term" value="C:nucleus"/>
    <property type="evidence" value="ECO:0007669"/>
    <property type="project" value="UniProtKB-SubCell"/>
</dbReference>
<dbReference type="GO" id="GO:0005524">
    <property type="term" value="F:ATP binding"/>
    <property type="evidence" value="ECO:0007669"/>
    <property type="project" value="UniProtKB-KW"/>
</dbReference>
<dbReference type="GO" id="GO:0106310">
    <property type="term" value="F:protein serine kinase activity"/>
    <property type="evidence" value="ECO:0007669"/>
    <property type="project" value="RHEA"/>
</dbReference>
<dbReference type="GO" id="GO:0004674">
    <property type="term" value="F:protein serine/threonine kinase activity"/>
    <property type="evidence" value="ECO:0007669"/>
    <property type="project" value="UniProtKB-KW"/>
</dbReference>
<dbReference type="GO" id="GO:0004712">
    <property type="term" value="F:protein serine/threonine/tyrosine kinase activity"/>
    <property type="evidence" value="ECO:0007669"/>
    <property type="project" value="UniProtKB-EC"/>
</dbReference>
<dbReference type="GO" id="GO:0004713">
    <property type="term" value="F:protein tyrosine kinase activity"/>
    <property type="evidence" value="ECO:0007669"/>
    <property type="project" value="RHEA"/>
</dbReference>
<dbReference type="CDD" id="cd14133">
    <property type="entry name" value="PKc_DYRK_like"/>
    <property type="match status" value="1"/>
</dbReference>
<dbReference type="Gene3D" id="3.30.200.20">
    <property type="entry name" value="Phosphorylase Kinase, domain 1"/>
    <property type="match status" value="1"/>
</dbReference>
<dbReference type="Gene3D" id="1.10.510.10">
    <property type="entry name" value="Transferase(Phosphotransferase) domain 1"/>
    <property type="match status" value="1"/>
</dbReference>
<dbReference type="InterPro" id="IPR011009">
    <property type="entry name" value="Kinase-like_dom_sf"/>
</dbReference>
<dbReference type="InterPro" id="IPR000719">
    <property type="entry name" value="Prot_kinase_dom"/>
</dbReference>
<dbReference type="InterPro" id="IPR017441">
    <property type="entry name" value="Protein_kinase_ATP_BS"/>
</dbReference>
<dbReference type="InterPro" id="IPR008271">
    <property type="entry name" value="Ser/Thr_kinase_AS"/>
</dbReference>
<dbReference type="InterPro" id="IPR050494">
    <property type="entry name" value="Ser_Thr_dual-spec_kinase"/>
</dbReference>
<dbReference type="PANTHER" id="PTHR24058">
    <property type="entry name" value="DUAL SPECIFICITY PROTEIN KINASE"/>
    <property type="match status" value="1"/>
</dbReference>
<dbReference type="Pfam" id="PF00069">
    <property type="entry name" value="Pkinase"/>
    <property type="match status" value="1"/>
</dbReference>
<dbReference type="SMART" id="SM00220">
    <property type="entry name" value="S_TKc"/>
    <property type="match status" value="1"/>
</dbReference>
<dbReference type="SUPFAM" id="SSF56112">
    <property type="entry name" value="Protein kinase-like (PK-like)"/>
    <property type="match status" value="1"/>
</dbReference>
<dbReference type="PROSITE" id="PS00107">
    <property type="entry name" value="PROTEIN_KINASE_ATP"/>
    <property type="match status" value="1"/>
</dbReference>
<dbReference type="PROSITE" id="PS50011">
    <property type="entry name" value="PROTEIN_KINASE_DOM"/>
    <property type="match status" value="1"/>
</dbReference>
<dbReference type="PROSITE" id="PS00108">
    <property type="entry name" value="PROTEIN_KINASE_ST"/>
    <property type="match status" value="1"/>
</dbReference>
<feature type="chain" id="PRO_0000384422" description="Probable dual specificity protein kinase YAK1 homolog">
    <location>
        <begin position="1"/>
        <end position="405"/>
    </location>
</feature>
<feature type="domain" description="Protein kinase" evidence="2">
    <location>
        <begin position="40"/>
        <end position="335"/>
    </location>
</feature>
<feature type="active site" description="Proton acceptor" evidence="2 3">
    <location>
        <position position="163"/>
    </location>
</feature>
<feature type="binding site" evidence="2">
    <location>
        <begin position="46"/>
        <end position="54"/>
    </location>
    <ligand>
        <name>ATP</name>
        <dbReference type="ChEBI" id="CHEBI:30616"/>
    </ligand>
</feature>
<feature type="binding site" evidence="2">
    <location>
        <position position="68"/>
    </location>
    <ligand>
        <name>ATP</name>
        <dbReference type="ChEBI" id="CHEBI:30616"/>
    </ligand>
</feature>
<comment type="function">
    <text evidence="1">Negative regulator of the cell cycle acting downstream of the cAMP-dependent protein kinase. Part of a glucose-sensing system involved in growth control in response to glucose availability (By similarity).</text>
</comment>
<comment type="catalytic activity">
    <reaction>
        <text>L-seryl-[protein] + ATP = O-phospho-L-seryl-[protein] + ADP + H(+)</text>
        <dbReference type="Rhea" id="RHEA:17989"/>
        <dbReference type="Rhea" id="RHEA-COMP:9863"/>
        <dbReference type="Rhea" id="RHEA-COMP:11604"/>
        <dbReference type="ChEBI" id="CHEBI:15378"/>
        <dbReference type="ChEBI" id="CHEBI:29999"/>
        <dbReference type="ChEBI" id="CHEBI:30616"/>
        <dbReference type="ChEBI" id="CHEBI:83421"/>
        <dbReference type="ChEBI" id="CHEBI:456216"/>
        <dbReference type="EC" id="2.7.12.1"/>
    </reaction>
</comment>
<comment type="catalytic activity">
    <reaction>
        <text>L-threonyl-[protein] + ATP = O-phospho-L-threonyl-[protein] + ADP + H(+)</text>
        <dbReference type="Rhea" id="RHEA:46608"/>
        <dbReference type="Rhea" id="RHEA-COMP:11060"/>
        <dbReference type="Rhea" id="RHEA-COMP:11605"/>
        <dbReference type="ChEBI" id="CHEBI:15378"/>
        <dbReference type="ChEBI" id="CHEBI:30013"/>
        <dbReference type="ChEBI" id="CHEBI:30616"/>
        <dbReference type="ChEBI" id="CHEBI:61977"/>
        <dbReference type="ChEBI" id="CHEBI:456216"/>
        <dbReference type="EC" id="2.7.12.1"/>
    </reaction>
</comment>
<comment type="catalytic activity">
    <reaction>
        <text>L-tyrosyl-[protein] + ATP = O-phospho-L-tyrosyl-[protein] + ADP + H(+)</text>
        <dbReference type="Rhea" id="RHEA:10596"/>
        <dbReference type="Rhea" id="RHEA-COMP:10136"/>
        <dbReference type="Rhea" id="RHEA-COMP:20101"/>
        <dbReference type="ChEBI" id="CHEBI:15378"/>
        <dbReference type="ChEBI" id="CHEBI:30616"/>
        <dbReference type="ChEBI" id="CHEBI:46858"/>
        <dbReference type="ChEBI" id="CHEBI:61978"/>
        <dbReference type="ChEBI" id="CHEBI:456216"/>
        <dbReference type="EC" id="2.7.12.1"/>
    </reaction>
</comment>
<comment type="subcellular location">
    <subcellularLocation>
        <location evidence="1">Cytoplasm</location>
    </subcellularLocation>
    <subcellularLocation>
        <location evidence="1">Nucleus</location>
    </subcellularLocation>
    <text evidence="1">Shuttles between both compartments in response to glucose.</text>
</comment>
<comment type="similarity">
    <text evidence="4">Belongs to the protein kinase superfamily. CMGC Ser/Thr protein kinase family. MNB/DYRK subfamily.</text>
</comment>
<evidence type="ECO:0000250" key="1"/>
<evidence type="ECO:0000255" key="2">
    <source>
        <dbReference type="PROSITE-ProRule" id="PRU00159"/>
    </source>
</evidence>
<evidence type="ECO:0000255" key="3">
    <source>
        <dbReference type="PROSITE-ProRule" id="PRU10027"/>
    </source>
</evidence>
<evidence type="ECO:0000305" key="4"/>
<gene>
    <name type="primary">YAK1</name>
    <name type="ordered locus">ECU11_0180</name>
</gene>
<protein>
    <recommendedName>
        <fullName>Probable dual specificity protein kinase YAK1 homolog</fullName>
        <ecNumber>2.7.12.1</ecNumber>
    </recommendedName>
</protein>
<organism>
    <name type="scientific">Encephalitozoon cuniculi (strain GB-M1)</name>
    <name type="common">Microsporidian parasite</name>
    <dbReference type="NCBI Taxonomy" id="284813"/>
    <lineage>
        <taxon>Eukaryota</taxon>
        <taxon>Fungi</taxon>
        <taxon>Fungi incertae sedis</taxon>
        <taxon>Microsporidia</taxon>
        <taxon>Unikaryonidae</taxon>
        <taxon>Encephalitozoon</taxon>
    </lineage>
</organism>
<accession>Q8SQZ4</accession>
<proteinExistence type="inferred from homology"/>